<dbReference type="EC" id="3.6.1.55" evidence="1"/>
<dbReference type="EMBL" id="L07579">
    <property type="protein sequence ID" value="AAA16277.1"/>
    <property type="molecule type" value="Unassigned_DNA"/>
</dbReference>
<dbReference type="PIR" id="JT0675">
    <property type="entry name" value="JT0675"/>
</dbReference>
<dbReference type="SMR" id="P32090"/>
<dbReference type="STRING" id="585.DR95_2914"/>
<dbReference type="GO" id="GO:0035539">
    <property type="term" value="F:8-oxo-7,8-dihydrodeoxyguanosine triphosphate pyrophosphatase activity"/>
    <property type="evidence" value="ECO:0007669"/>
    <property type="project" value="UniProtKB-EC"/>
</dbReference>
<dbReference type="GO" id="GO:0008413">
    <property type="term" value="F:8-oxo-7,8-dihydroguanosine triphosphate pyrophosphatase activity"/>
    <property type="evidence" value="ECO:0007669"/>
    <property type="project" value="InterPro"/>
</dbReference>
<dbReference type="GO" id="GO:0044715">
    <property type="term" value="F:8-oxo-dGDP phosphatase activity"/>
    <property type="evidence" value="ECO:0007669"/>
    <property type="project" value="TreeGrafter"/>
</dbReference>
<dbReference type="GO" id="GO:0044716">
    <property type="term" value="F:8-oxo-GDP phosphatase activity"/>
    <property type="evidence" value="ECO:0007669"/>
    <property type="project" value="TreeGrafter"/>
</dbReference>
<dbReference type="GO" id="GO:0046872">
    <property type="term" value="F:metal ion binding"/>
    <property type="evidence" value="ECO:0007669"/>
    <property type="project" value="UniProtKB-KW"/>
</dbReference>
<dbReference type="GO" id="GO:0006281">
    <property type="term" value="P:DNA repair"/>
    <property type="evidence" value="ECO:0007669"/>
    <property type="project" value="UniProtKB-KW"/>
</dbReference>
<dbReference type="GO" id="GO:0006260">
    <property type="term" value="P:DNA replication"/>
    <property type="evidence" value="ECO:0007669"/>
    <property type="project" value="UniProtKB-KW"/>
</dbReference>
<dbReference type="CDD" id="cd03425">
    <property type="entry name" value="NUDIX_MutT_NudA_like"/>
    <property type="match status" value="1"/>
</dbReference>
<dbReference type="Gene3D" id="3.90.79.10">
    <property type="entry name" value="Nucleoside Triphosphate Pyrophosphohydrolase"/>
    <property type="match status" value="1"/>
</dbReference>
<dbReference type="InterPro" id="IPR003561">
    <property type="entry name" value="Mutator_MutT"/>
</dbReference>
<dbReference type="InterPro" id="IPR047127">
    <property type="entry name" value="MutT-like"/>
</dbReference>
<dbReference type="InterPro" id="IPR029119">
    <property type="entry name" value="MutY_C"/>
</dbReference>
<dbReference type="InterPro" id="IPR020476">
    <property type="entry name" value="Nudix_hydrolase"/>
</dbReference>
<dbReference type="InterPro" id="IPR015797">
    <property type="entry name" value="NUDIX_hydrolase-like_dom_sf"/>
</dbReference>
<dbReference type="InterPro" id="IPR020084">
    <property type="entry name" value="NUDIX_hydrolase_CS"/>
</dbReference>
<dbReference type="InterPro" id="IPR000086">
    <property type="entry name" value="NUDIX_hydrolase_dom"/>
</dbReference>
<dbReference type="NCBIfam" id="TIGR00586">
    <property type="entry name" value="mutt"/>
    <property type="match status" value="1"/>
</dbReference>
<dbReference type="PANTHER" id="PTHR47707">
    <property type="entry name" value="8-OXO-DGTP DIPHOSPHATASE"/>
    <property type="match status" value="1"/>
</dbReference>
<dbReference type="PANTHER" id="PTHR47707:SF1">
    <property type="entry name" value="NUDIX HYDROLASE FAMILY PROTEIN"/>
    <property type="match status" value="1"/>
</dbReference>
<dbReference type="Pfam" id="PF14815">
    <property type="entry name" value="NUDIX_4"/>
    <property type="match status" value="1"/>
</dbReference>
<dbReference type="PRINTS" id="PR01401">
    <property type="entry name" value="MUTATORMUTT"/>
</dbReference>
<dbReference type="PRINTS" id="PR00502">
    <property type="entry name" value="NUDIXFAMILY"/>
</dbReference>
<dbReference type="SUPFAM" id="SSF55811">
    <property type="entry name" value="Nudix"/>
    <property type="match status" value="1"/>
</dbReference>
<dbReference type="PROSITE" id="PS51462">
    <property type="entry name" value="NUDIX"/>
    <property type="match status" value="1"/>
</dbReference>
<dbReference type="PROSITE" id="PS00893">
    <property type="entry name" value="NUDIX_BOX"/>
    <property type="match status" value="1"/>
</dbReference>
<gene>
    <name type="primary">mutT</name>
</gene>
<organism>
    <name type="scientific">Proteus vulgaris</name>
    <dbReference type="NCBI Taxonomy" id="585"/>
    <lineage>
        <taxon>Bacteria</taxon>
        <taxon>Pseudomonadati</taxon>
        <taxon>Pseudomonadota</taxon>
        <taxon>Gammaproteobacteria</taxon>
        <taxon>Enterobacterales</taxon>
        <taxon>Morganellaceae</taxon>
        <taxon>Proteus</taxon>
    </lineage>
</organism>
<reference key="1">
    <citation type="journal article" date="1993" name="Gene">
        <title>Sequence and characterization of mutT from Proteus vulgaris.</title>
        <authorList>
            <person name="Kamath A.V."/>
            <person name="Yanofsky C."/>
        </authorList>
    </citation>
    <scope>NUCLEOTIDE SEQUENCE [GENOMIC DNA]</scope>
</reference>
<comment type="function">
    <text evidence="1">Specifically hydrolyzes both 8-oxo-deoxyguanosine triphosphate (8-oxo-dGTP) and 8-oxo-guanosine triphosphate (8-oxo-GTP) to the related monophosphates, thereby cleaning up the nucleotide pools and preventing misincorporation of 8-oxoGua into DNA and RNA. It prevents replicational errors by removing an oxidatively damaged form of guanine (8-oxo-dGTP) from DNA and the nucleotide pool. 8-oxo-dGTP can be inserted opposite dA and dC residues of template DNA with almost equal efficiency thus leading to A.T to G.C transversions.</text>
</comment>
<comment type="catalytic activity">
    <reaction evidence="1">
        <text>8-oxo-dGTP + H2O = 8-oxo-dGMP + diphosphate + H(+)</text>
        <dbReference type="Rhea" id="RHEA:31575"/>
        <dbReference type="ChEBI" id="CHEBI:15377"/>
        <dbReference type="ChEBI" id="CHEBI:15378"/>
        <dbReference type="ChEBI" id="CHEBI:33019"/>
        <dbReference type="ChEBI" id="CHEBI:63224"/>
        <dbReference type="ChEBI" id="CHEBI:77896"/>
        <dbReference type="EC" id="3.6.1.55"/>
    </reaction>
</comment>
<comment type="catalytic activity">
    <reaction evidence="1">
        <text>8-oxo-GTP + H2O = 8-oxo-GMP + diphosphate + H(+)</text>
        <dbReference type="Rhea" id="RHEA:67616"/>
        <dbReference type="ChEBI" id="CHEBI:15377"/>
        <dbReference type="ChEBI" id="CHEBI:15378"/>
        <dbReference type="ChEBI" id="CHEBI:33019"/>
        <dbReference type="ChEBI" id="CHEBI:143553"/>
        <dbReference type="ChEBI" id="CHEBI:145694"/>
    </reaction>
</comment>
<comment type="cofactor">
    <cofactor evidence="1">
        <name>Mg(2+)</name>
        <dbReference type="ChEBI" id="CHEBI:18420"/>
    </cofactor>
</comment>
<comment type="similarity">
    <text evidence="3">Belongs to the Nudix hydrolase family.</text>
</comment>
<protein>
    <recommendedName>
        <fullName>8-oxo-dGTP diphosphatase</fullName>
        <shortName>8-oxo-dGTPase</shortName>
        <ecNumber evidence="1">3.6.1.55</ecNumber>
    </recommendedName>
    <alternativeName>
        <fullName>7,8-dihydro-8-oxoguanine-triphosphatase</fullName>
    </alternativeName>
    <alternativeName>
        <fullName>Mutator protein MutT</fullName>
    </alternativeName>
    <alternativeName>
        <fullName>dGTP pyrophosphohydrolase</fullName>
    </alternativeName>
</protein>
<proteinExistence type="inferred from homology"/>
<keyword id="KW-0227">DNA damage</keyword>
<keyword id="KW-0234">DNA repair</keyword>
<keyword id="KW-0235">DNA replication</keyword>
<keyword id="KW-0378">Hydrolase</keyword>
<keyword id="KW-0460">Magnesium</keyword>
<keyword id="KW-0479">Metal-binding</keyword>
<keyword id="KW-0515">Mutator protein</keyword>
<sequence>MMDKKKLHIAAGVICDKHNNVFIAQRPLKSHMGGFWEFPGGKLEDNETPEQALLRELQEEIGIDVTQCTLLDTVAHDFPDRHITLSFFLVTEWKNELTEKKGSCRVGHLLCL</sequence>
<name>MUTT_PROVU</name>
<evidence type="ECO:0000250" key="1">
    <source>
        <dbReference type="UniProtKB" id="P08337"/>
    </source>
</evidence>
<evidence type="ECO:0000255" key="2">
    <source>
        <dbReference type="PROSITE-ProRule" id="PRU00794"/>
    </source>
</evidence>
<evidence type="ECO:0000305" key="3"/>
<feature type="chain" id="PRO_0000056947" description="8-oxo-dGTP diphosphatase">
    <location>
        <begin position="1"/>
        <end position="112"/>
    </location>
</feature>
<feature type="domain" description="Nudix hydrolase" evidence="2">
    <location>
        <begin position="6"/>
        <end position="112"/>
    </location>
</feature>
<feature type="short sequence motif" description="Nudix box" evidence="2">
    <location>
        <begin position="41"/>
        <end position="62"/>
    </location>
</feature>
<feature type="binding site" evidence="1">
    <location>
        <position position="40"/>
    </location>
    <ligand>
        <name>Mg(2+)</name>
        <dbReference type="ChEBI" id="CHEBI:18420"/>
    </ligand>
</feature>
<feature type="binding site" evidence="1">
    <location>
        <position position="60"/>
    </location>
    <ligand>
        <name>Mg(2+)</name>
        <dbReference type="ChEBI" id="CHEBI:18420"/>
    </ligand>
</feature>
<accession>P32090</accession>